<feature type="chain" id="PRO_0000194598" description="Xylose operon regulatory protein">
    <location>
        <begin position="1"/>
        <end position="392"/>
    </location>
</feature>
<feature type="domain" description="HTH araC/xylS-type" evidence="2">
    <location>
        <begin position="288"/>
        <end position="386"/>
    </location>
</feature>
<feature type="DNA-binding region" description="H-T-H motif" evidence="2">
    <location>
        <begin position="305"/>
        <end position="326"/>
    </location>
</feature>
<feature type="DNA-binding region" description="H-T-H motif" evidence="2">
    <location>
        <begin position="353"/>
        <end position="376"/>
    </location>
</feature>
<evidence type="ECO:0000250" key="1"/>
<evidence type="ECO:0000255" key="2">
    <source>
        <dbReference type="PROSITE-ProRule" id="PRU00593"/>
    </source>
</evidence>
<protein>
    <recommendedName>
        <fullName>Xylose operon regulatory protein</fullName>
    </recommendedName>
</protein>
<organism>
    <name type="scientific">Escherichia coli O157:H7</name>
    <dbReference type="NCBI Taxonomy" id="83334"/>
    <lineage>
        <taxon>Bacteria</taxon>
        <taxon>Pseudomonadati</taxon>
        <taxon>Pseudomonadota</taxon>
        <taxon>Gammaproteobacteria</taxon>
        <taxon>Enterobacterales</taxon>
        <taxon>Enterobacteriaceae</taxon>
        <taxon>Escherichia</taxon>
    </lineage>
</organism>
<comment type="function">
    <text evidence="1">Regulatory protein for the xylBAFGHR operon.</text>
</comment>
<keyword id="KW-0238">DNA-binding</keyword>
<keyword id="KW-1185">Reference proteome</keyword>
<keyword id="KW-0804">Transcription</keyword>
<keyword id="KW-0805">Transcription regulation</keyword>
<proteinExistence type="inferred from homology"/>
<dbReference type="EMBL" id="AE005174">
    <property type="protein sequence ID" value="AAG58718.1"/>
    <property type="molecule type" value="Genomic_DNA"/>
</dbReference>
<dbReference type="EMBL" id="BA000007">
    <property type="protein sequence ID" value="BAB37875.1"/>
    <property type="molecule type" value="Genomic_DNA"/>
</dbReference>
<dbReference type="PIR" id="B86032">
    <property type="entry name" value="B86032"/>
</dbReference>
<dbReference type="PIR" id="D91185">
    <property type="entry name" value="D91185"/>
</dbReference>
<dbReference type="RefSeq" id="NP_312479.1">
    <property type="nucleotide sequence ID" value="NC_002695.1"/>
</dbReference>
<dbReference type="RefSeq" id="WP_000494484.1">
    <property type="nucleotide sequence ID" value="NZ_VOAI01000004.1"/>
</dbReference>
<dbReference type="SMR" id="P0ACI5"/>
<dbReference type="STRING" id="155864.Z4994"/>
<dbReference type="GeneID" id="75203010"/>
<dbReference type="GeneID" id="915610"/>
<dbReference type="KEGG" id="ece:Z4994"/>
<dbReference type="KEGG" id="ecs:ECs_4452"/>
<dbReference type="PATRIC" id="fig|386585.9.peg.4661"/>
<dbReference type="eggNOG" id="COG1609">
    <property type="taxonomic scope" value="Bacteria"/>
</dbReference>
<dbReference type="eggNOG" id="COG2207">
    <property type="taxonomic scope" value="Bacteria"/>
</dbReference>
<dbReference type="HOGENOM" id="CLU_042405_1_0_6"/>
<dbReference type="OMA" id="VEAAFMH"/>
<dbReference type="Proteomes" id="UP000000558">
    <property type="component" value="Chromosome"/>
</dbReference>
<dbReference type="Proteomes" id="UP000002519">
    <property type="component" value="Chromosome"/>
</dbReference>
<dbReference type="GO" id="GO:0003700">
    <property type="term" value="F:DNA-binding transcription factor activity"/>
    <property type="evidence" value="ECO:0007669"/>
    <property type="project" value="InterPro"/>
</dbReference>
<dbReference type="GO" id="GO:0000976">
    <property type="term" value="F:transcription cis-regulatory region binding"/>
    <property type="evidence" value="ECO:0007669"/>
    <property type="project" value="TreeGrafter"/>
</dbReference>
<dbReference type="CDD" id="cd01543">
    <property type="entry name" value="PBP1_XylR"/>
    <property type="match status" value="1"/>
</dbReference>
<dbReference type="FunFam" id="1.10.10.60:FF:000136">
    <property type="entry name" value="Transcriptional regulator, AraC family"/>
    <property type="match status" value="1"/>
</dbReference>
<dbReference type="Gene3D" id="3.40.50.2300">
    <property type="match status" value="2"/>
</dbReference>
<dbReference type="Gene3D" id="1.10.10.60">
    <property type="entry name" value="Homeodomain-like"/>
    <property type="match status" value="1"/>
</dbReference>
<dbReference type="InterPro" id="IPR009057">
    <property type="entry name" value="Homeodomain-like_sf"/>
</dbReference>
<dbReference type="InterPro" id="IPR018060">
    <property type="entry name" value="HTH_AraC"/>
</dbReference>
<dbReference type="InterPro" id="IPR018062">
    <property type="entry name" value="HTH_AraC-typ_CS"/>
</dbReference>
<dbReference type="InterPro" id="IPR046335">
    <property type="entry name" value="LacI/GalR-like_sensor"/>
</dbReference>
<dbReference type="InterPro" id="IPR028082">
    <property type="entry name" value="Peripla_BP_I"/>
</dbReference>
<dbReference type="InterPro" id="IPR020449">
    <property type="entry name" value="Tscrpt_reg_AraC-type_HTH"/>
</dbReference>
<dbReference type="InterPro" id="IPR054031">
    <property type="entry name" value="XylR_PBP1"/>
</dbReference>
<dbReference type="PANTHER" id="PTHR30146">
    <property type="entry name" value="LACI-RELATED TRANSCRIPTIONAL REPRESSOR"/>
    <property type="match status" value="1"/>
</dbReference>
<dbReference type="PANTHER" id="PTHR30146:SF24">
    <property type="entry name" value="XYLOSE OPERON REGULATORY PROTEIN"/>
    <property type="match status" value="1"/>
</dbReference>
<dbReference type="Pfam" id="PF12833">
    <property type="entry name" value="HTH_18"/>
    <property type="match status" value="1"/>
</dbReference>
<dbReference type="Pfam" id="PF22177">
    <property type="entry name" value="PBP1_XylR"/>
    <property type="match status" value="1"/>
</dbReference>
<dbReference type="Pfam" id="PF13377">
    <property type="entry name" value="Peripla_BP_3"/>
    <property type="match status" value="1"/>
</dbReference>
<dbReference type="PRINTS" id="PR00032">
    <property type="entry name" value="HTHARAC"/>
</dbReference>
<dbReference type="SMART" id="SM00342">
    <property type="entry name" value="HTH_ARAC"/>
    <property type="match status" value="1"/>
</dbReference>
<dbReference type="SUPFAM" id="SSF46689">
    <property type="entry name" value="Homeodomain-like"/>
    <property type="match status" value="2"/>
</dbReference>
<dbReference type="SUPFAM" id="SSF53822">
    <property type="entry name" value="Periplasmic binding protein-like I"/>
    <property type="match status" value="1"/>
</dbReference>
<dbReference type="PROSITE" id="PS00041">
    <property type="entry name" value="HTH_ARAC_FAMILY_1"/>
    <property type="match status" value="1"/>
</dbReference>
<dbReference type="PROSITE" id="PS01124">
    <property type="entry name" value="HTH_ARAC_FAMILY_2"/>
    <property type="match status" value="1"/>
</dbReference>
<name>XYLR_ECO57</name>
<reference key="1">
    <citation type="journal article" date="2001" name="Nature">
        <title>Genome sequence of enterohaemorrhagic Escherichia coli O157:H7.</title>
        <authorList>
            <person name="Perna N.T."/>
            <person name="Plunkett G. III"/>
            <person name="Burland V."/>
            <person name="Mau B."/>
            <person name="Glasner J.D."/>
            <person name="Rose D.J."/>
            <person name="Mayhew G.F."/>
            <person name="Evans P.S."/>
            <person name="Gregor J."/>
            <person name="Kirkpatrick H.A."/>
            <person name="Posfai G."/>
            <person name="Hackett J."/>
            <person name="Klink S."/>
            <person name="Boutin A."/>
            <person name="Shao Y."/>
            <person name="Miller L."/>
            <person name="Grotbeck E.J."/>
            <person name="Davis N.W."/>
            <person name="Lim A."/>
            <person name="Dimalanta E.T."/>
            <person name="Potamousis K."/>
            <person name="Apodaca J."/>
            <person name="Anantharaman T.S."/>
            <person name="Lin J."/>
            <person name="Yen G."/>
            <person name="Schwartz D.C."/>
            <person name="Welch R.A."/>
            <person name="Blattner F.R."/>
        </authorList>
    </citation>
    <scope>NUCLEOTIDE SEQUENCE [LARGE SCALE GENOMIC DNA]</scope>
    <source>
        <strain>O157:H7 / EDL933 / ATCC 700927 / EHEC</strain>
    </source>
</reference>
<reference key="2">
    <citation type="journal article" date="2001" name="DNA Res.">
        <title>Complete genome sequence of enterohemorrhagic Escherichia coli O157:H7 and genomic comparison with a laboratory strain K-12.</title>
        <authorList>
            <person name="Hayashi T."/>
            <person name="Makino K."/>
            <person name="Ohnishi M."/>
            <person name="Kurokawa K."/>
            <person name="Ishii K."/>
            <person name="Yokoyama K."/>
            <person name="Han C.-G."/>
            <person name="Ohtsubo E."/>
            <person name="Nakayama K."/>
            <person name="Murata T."/>
            <person name="Tanaka M."/>
            <person name="Tobe T."/>
            <person name="Iida T."/>
            <person name="Takami H."/>
            <person name="Honda T."/>
            <person name="Sasakawa C."/>
            <person name="Ogasawara N."/>
            <person name="Yasunaga T."/>
            <person name="Kuhara S."/>
            <person name="Shiba T."/>
            <person name="Hattori M."/>
            <person name="Shinagawa H."/>
        </authorList>
    </citation>
    <scope>NUCLEOTIDE SEQUENCE [LARGE SCALE GENOMIC DNA]</scope>
    <source>
        <strain>O157:H7 / Sakai / RIMD 0509952 / EHEC</strain>
    </source>
</reference>
<accession>P0ACI5</accession>
<accession>P37390</accession>
<gene>
    <name type="primary">xylR</name>
    <name type="ordered locus">Z4994</name>
    <name type="ordered locus">ECs4452</name>
</gene>
<sequence>MFTKRHRITLLFNANKAYDRQVVEGVGEYLQASQSEWDIFIEEDFRARIDKIKDWLGDGVIADFDDKQIEQALADVDVPIVGVGGSYHLAESYPPVHYIATDNYALVESAFLHLKEKGVNRFAFYGLPESSGKRWATEREYAFRQLVAEEKYRGVVYQGLETAPENWQHAQNRLADWLQTLPPQTGIIAVTDARARHILQVCEHLHIPVPEKLCVIGIDNEELTRYLSRVALSSVAQGARQMGYQAAKLLHRLLDKEEMPLQRILVPPVRVIERRSTDYRSLTDPAVIQAMHYIRNHACKGIKVDQVLDAVGISRSNLEKRFKEEVGETIHAMIHAEKLEKARSLLISTTLSINEISQMCGYPSLQYFYSVFKKAYDTTPKEYRDVNSEVML</sequence>